<keyword id="KW-0002">3D-structure</keyword>
<keyword id="KW-0028">Amino-acid biosynthesis</keyword>
<keyword id="KW-0963">Cytoplasm</keyword>
<keyword id="KW-0554">One-carbon metabolism</keyword>
<keyword id="KW-0663">Pyridoxal phosphate</keyword>
<keyword id="KW-1185">Reference proteome</keyword>
<keyword id="KW-0808">Transferase</keyword>
<accession>A1SUU0</accession>
<proteinExistence type="evidence at protein level"/>
<comment type="function">
    <text evidence="1">Catalyzes the reversible interconversion of serine and glycine with tetrahydrofolate (THF) serving as the one-carbon carrier. This reaction serves as the major source of one-carbon groups required for the biosynthesis of purines, thymidylate, methionine, and other important biomolecules. Also exhibits THF-independent aldolase activity toward beta-hydroxyamino acids, producing glycine and aldehydes, via a retro-aldol mechanism.</text>
</comment>
<comment type="catalytic activity">
    <reaction evidence="1">
        <text>(6R)-5,10-methylene-5,6,7,8-tetrahydrofolate + glycine + H2O = (6S)-5,6,7,8-tetrahydrofolate + L-serine</text>
        <dbReference type="Rhea" id="RHEA:15481"/>
        <dbReference type="ChEBI" id="CHEBI:15377"/>
        <dbReference type="ChEBI" id="CHEBI:15636"/>
        <dbReference type="ChEBI" id="CHEBI:33384"/>
        <dbReference type="ChEBI" id="CHEBI:57305"/>
        <dbReference type="ChEBI" id="CHEBI:57453"/>
        <dbReference type="EC" id="2.1.2.1"/>
    </reaction>
</comment>
<comment type="cofactor">
    <cofactor evidence="1">
        <name>pyridoxal 5'-phosphate</name>
        <dbReference type="ChEBI" id="CHEBI:597326"/>
    </cofactor>
</comment>
<comment type="pathway">
    <text evidence="1">One-carbon metabolism; tetrahydrofolate interconversion.</text>
</comment>
<comment type="pathway">
    <text evidence="1">Amino-acid biosynthesis; glycine biosynthesis; glycine from L-serine: step 1/1.</text>
</comment>
<comment type="subunit">
    <text evidence="1">Homodimer.</text>
</comment>
<comment type="subcellular location">
    <subcellularLocation>
        <location evidence="1">Cytoplasm</location>
    </subcellularLocation>
</comment>
<comment type="similarity">
    <text evidence="1">Belongs to the SHMT family.</text>
</comment>
<feature type="chain" id="PRO_1000006301" description="Serine hydroxymethyltransferase">
    <location>
        <begin position="1"/>
        <end position="421"/>
    </location>
</feature>
<feature type="binding site" evidence="1">
    <location>
        <position position="121"/>
    </location>
    <ligand>
        <name>(6S)-5,6,7,8-tetrahydrofolate</name>
        <dbReference type="ChEBI" id="CHEBI:57453"/>
    </ligand>
</feature>
<feature type="binding site" evidence="1">
    <location>
        <begin position="125"/>
        <end position="127"/>
    </location>
    <ligand>
        <name>(6S)-5,6,7,8-tetrahydrofolate</name>
        <dbReference type="ChEBI" id="CHEBI:57453"/>
    </ligand>
</feature>
<feature type="binding site" evidence="1">
    <location>
        <begin position="355"/>
        <end position="357"/>
    </location>
    <ligand>
        <name>(6S)-5,6,7,8-tetrahydrofolate</name>
        <dbReference type="ChEBI" id="CHEBI:57453"/>
    </ligand>
</feature>
<feature type="site" description="Plays an important role in substrate specificity" evidence="1">
    <location>
        <position position="229"/>
    </location>
</feature>
<feature type="modified residue" description="N6-(pyridoxal phosphate)lysine" evidence="1">
    <location>
        <position position="230"/>
    </location>
</feature>
<feature type="helix" evidence="2">
    <location>
        <begin position="8"/>
        <end position="11"/>
    </location>
</feature>
<feature type="helix" evidence="2">
    <location>
        <begin position="13"/>
        <end position="28"/>
    </location>
</feature>
<feature type="strand" evidence="2">
    <location>
        <begin position="29"/>
        <end position="31"/>
    </location>
</feature>
<feature type="helix" evidence="2">
    <location>
        <begin position="41"/>
        <end position="47"/>
    </location>
</feature>
<feature type="helix" evidence="2">
    <location>
        <begin position="50"/>
        <end position="53"/>
    </location>
</feature>
<feature type="strand" evidence="2">
    <location>
        <begin position="62"/>
        <end position="66"/>
    </location>
</feature>
<feature type="helix" evidence="2">
    <location>
        <begin position="71"/>
        <end position="86"/>
    </location>
</feature>
<feature type="strand" evidence="2">
    <location>
        <begin position="89"/>
        <end position="92"/>
    </location>
</feature>
<feature type="helix" evidence="2">
    <location>
        <begin position="98"/>
        <end position="109"/>
    </location>
</feature>
<feature type="strand" evidence="2">
    <location>
        <begin position="115"/>
        <end position="118"/>
    </location>
</feature>
<feature type="strand" evidence="2">
    <location>
        <begin position="141"/>
        <end position="144"/>
    </location>
</feature>
<feature type="helix" evidence="2">
    <location>
        <begin position="156"/>
        <end position="166"/>
    </location>
</feature>
<feature type="strand" evidence="2">
    <location>
        <begin position="169"/>
        <end position="173"/>
    </location>
</feature>
<feature type="helix" evidence="2">
    <location>
        <begin position="184"/>
        <end position="194"/>
    </location>
</feature>
<feature type="strand" evidence="2">
    <location>
        <begin position="197"/>
        <end position="201"/>
    </location>
</feature>
<feature type="turn" evidence="2">
    <location>
        <begin position="203"/>
        <end position="205"/>
    </location>
</feature>
<feature type="helix" evidence="2">
    <location>
        <begin position="206"/>
        <end position="210"/>
    </location>
</feature>
<feature type="turn" evidence="2">
    <location>
        <begin position="218"/>
        <end position="220"/>
    </location>
</feature>
<feature type="strand" evidence="2">
    <location>
        <begin position="221"/>
        <end position="230"/>
    </location>
</feature>
<feature type="strand" evidence="2">
    <location>
        <begin position="238"/>
        <end position="242"/>
    </location>
</feature>
<feature type="helix" evidence="2">
    <location>
        <begin position="246"/>
        <end position="256"/>
    </location>
</feature>
<feature type="turn" evidence="2">
    <location>
        <begin position="257"/>
        <end position="260"/>
    </location>
</feature>
<feature type="helix" evidence="2">
    <location>
        <begin position="266"/>
        <end position="278"/>
    </location>
</feature>
<feature type="helix" evidence="2">
    <location>
        <begin position="282"/>
        <end position="304"/>
    </location>
</feature>
<feature type="strand" evidence="2">
    <location>
        <begin position="308"/>
        <end position="310"/>
    </location>
</feature>
<feature type="strand" evidence="2">
    <location>
        <begin position="318"/>
        <end position="322"/>
    </location>
</feature>
<feature type="turn" evidence="2">
    <location>
        <begin position="324"/>
        <end position="327"/>
    </location>
</feature>
<feature type="helix" evidence="2">
    <location>
        <begin position="330"/>
        <end position="339"/>
    </location>
</feature>
<feature type="strand" evidence="2">
    <location>
        <begin position="361"/>
        <end position="365"/>
    </location>
</feature>
<feature type="helix" evidence="2">
    <location>
        <begin position="367"/>
        <end position="371"/>
    </location>
</feature>
<feature type="helix" evidence="2">
    <location>
        <begin position="376"/>
        <end position="395"/>
    </location>
</feature>
<feature type="helix" evidence="2">
    <location>
        <begin position="399"/>
        <end position="416"/>
    </location>
</feature>
<feature type="strand" evidence="2">
    <location>
        <begin position="419"/>
        <end position="421"/>
    </location>
</feature>
<reference key="1">
    <citation type="journal article" date="2008" name="BMC Genomics">
        <title>Genomics of an extreme psychrophile, Psychromonas ingrahamii.</title>
        <authorList>
            <person name="Riley M."/>
            <person name="Staley J.T."/>
            <person name="Danchin A."/>
            <person name="Wang T.Z."/>
            <person name="Brettin T.S."/>
            <person name="Hauser L.J."/>
            <person name="Land M.L."/>
            <person name="Thompson L.S."/>
        </authorList>
    </citation>
    <scope>NUCLEOTIDE SEQUENCE [LARGE SCALE GENOMIC DNA]</scope>
    <source>
        <strain>DSM 17664 / CCUG 51855 / 37</strain>
    </source>
</reference>
<organism>
    <name type="scientific">Psychromonas ingrahamii (strain DSM 17664 / CCUG 51855 / 37)</name>
    <dbReference type="NCBI Taxonomy" id="357804"/>
    <lineage>
        <taxon>Bacteria</taxon>
        <taxon>Pseudomonadati</taxon>
        <taxon>Pseudomonadota</taxon>
        <taxon>Gammaproteobacteria</taxon>
        <taxon>Alteromonadales</taxon>
        <taxon>Psychromonadaceae</taxon>
        <taxon>Psychromonas</taxon>
    </lineage>
</organism>
<name>GLYA_PSYIN</name>
<evidence type="ECO:0000255" key="1">
    <source>
        <dbReference type="HAMAP-Rule" id="MF_00051"/>
    </source>
</evidence>
<evidence type="ECO:0007829" key="2">
    <source>
        <dbReference type="PDB" id="4P3M"/>
    </source>
</evidence>
<sequence>MFNRDMNIADYDPELWQSITDEVQRQEDHIELIASENYTSPRVMEAQGSQLTNKYAEGYPGKRYYGGCEYVDVAESLAIERAKSLFGADYANVQPHSGSQANAAVYQALCAPGDTILGMSLAHGGHLTHGSHVSFSGKMYNAVQYGITPETGILDYAEIERLAVEHKPTMIIAGFSAYSGIVDWAKFREIADKVGAYLFVDMAHVAGLVAAGLYPNPVPFADVVTTTTHKTLGGPRGGLILAKANEAIEKKLNSAVFPGQQGGPLMHVIAAKAVAFKECAEPEFAVYQQQVLDNAKAMVKSFLARGYKIVSGGTENHLFLVDLIAQDITGKEADAALGNAHITVNKNSVPNDPRSPFVTSGLRIGTPALARRGVNAQQSAELALWMCDVLDAIKDEAKLATTITAVKVKVAALCKACPVYG</sequence>
<protein>
    <recommendedName>
        <fullName evidence="1">Serine hydroxymethyltransferase</fullName>
        <shortName evidence="1">SHMT</shortName>
        <shortName evidence="1">Serine methylase</shortName>
        <ecNumber evidence="1">2.1.2.1</ecNumber>
    </recommendedName>
</protein>
<dbReference type="EC" id="2.1.2.1" evidence="1"/>
<dbReference type="EMBL" id="CP000510">
    <property type="protein sequence ID" value="ABM03255.1"/>
    <property type="molecule type" value="Genomic_DNA"/>
</dbReference>
<dbReference type="RefSeq" id="WP_011769815.1">
    <property type="nucleotide sequence ID" value="NC_008709.1"/>
</dbReference>
<dbReference type="PDB" id="4P3M">
    <property type="method" value="X-ray"/>
    <property type="resolution" value="1.85 A"/>
    <property type="chains" value="A/B=1-421"/>
</dbReference>
<dbReference type="PDBsum" id="4P3M"/>
<dbReference type="SMR" id="A1SUU0"/>
<dbReference type="STRING" id="357804.Ping_1438"/>
<dbReference type="KEGG" id="pin:Ping_1438"/>
<dbReference type="eggNOG" id="COG0112">
    <property type="taxonomic scope" value="Bacteria"/>
</dbReference>
<dbReference type="HOGENOM" id="CLU_022477_2_1_6"/>
<dbReference type="OrthoDB" id="9803846at2"/>
<dbReference type="BRENDA" id="2.1.2.1">
    <property type="organism ID" value="11857"/>
</dbReference>
<dbReference type="UniPathway" id="UPA00193"/>
<dbReference type="UniPathway" id="UPA00288">
    <property type="reaction ID" value="UER01023"/>
</dbReference>
<dbReference type="EvolutionaryTrace" id="A1SUU0"/>
<dbReference type="Proteomes" id="UP000000639">
    <property type="component" value="Chromosome"/>
</dbReference>
<dbReference type="GO" id="GO:0005829">
    <property type="term" value="C:cytosol"/>
    <property type="evidence" value="ECO:0007669"/>
    <property type="project" value="TreeGrafter"/>
</dbReference>
<dbReference type="GO" id="GO:0004372">
    <property type="term" value="F:glycine hydroxymethyltransferase activity"/>
    <property type="evidence" value="ECO:0007669"/>
    <property type="project" value="UniProtKB-UniRule"/>
</dbReference>
<dbReference type="GO" id="GO:0030170">
    <property type="term" value="F:pyridoxal phosphate binding"/>
    <property type="evidence" value="ECO:0007669"/>
    <property type="project" value="UniProtKB-UniRule"/>
</dbReference>
<dbReference type="GO" id="GO:0019264">
    <property type="term" value="P:glycine biosynthetic process from serine"/>
    <property type="evidence" value="ECO:0007669"/>
    <property type="project" value="UniProtKB-UniRule"/>
</dbReference>
<dbReference type="GO" id="GO:0035999">
    <property type="term" value="P:tetrahydrofolate interconversion"/>
    <property type="evidence" value="ECO:0007669"/>
    <property type="project" value="UniProtKB-UniRule"/>
</dbReference>
<dbReference type="CDD" id="cd00378">
    <property type="entry name" value="SHMT"/>
    <property type="match status" value="1"/>
</dbReference>
<dbReference type="FunFam" id="3.40.640.10:FF:000001">
    <property type="entry name" value="Serine hydroxymethyltransferase"/>
    <property type="match status" value="1"/>
</dbReference>
<dbReference type="FunFam" id="3.90.1150.10:FF:000003">
    <property type="entry name" value="Serine hydroxymethyltransferase"/>
    <property type="match status" value="1"/>
</dbReference>
<dbReference type="Gene3D" id="3.90.1150.10">
    <property type="entry name" value="Aspartate Aminotransferase, domain 1"/>
    <property type="match status" value="1"/>
</dbReference>
<dbReference type="Gene3D" id="3.40.640.10">
    <property type="entry name" value="Type I PLP-dependent aspartate aminotransferase-like (Major domain)"/>
    <property type="match status" value="1"/>
</dbReference>
<dbReference type="HAMAP" id="MF_00051">
    <property type="entry name" value="SHMT"/>
    <property type="match status" value="1"/>
</dbReference>
<dbReference type="InterPro" id="IPR015424">
    <property type="entry name" value="PyrdxlP-dep_Trfase"/>
</dbReference>
<dbReference type="InterPro" id="IPR015421">
    <property type="entry name" value="PyrdxlP-dep_Trfase_major"/>
</dbReference>
<dbReference type="InterPro" id="IPR015422">
    <property type="entry name" value="PyrdxlP-dep_Trfase_small"/>
</dbReference>
<dbReference type="InterPro" id="IPR001085">
    <property type="entry name" value="Ser_HO-MeTrfase"/>
</dbReference>
<dbReference type="InterPro" id="IPR049943">
    <property type="entry name" value="Ser_HO-MeTrfase-like"/>
</dbReference>
<dbReference type="InterPro" id="IPR019798">
    <property type="entry name" value="Ser_HO-MeTrfase_PLP_BS"/>
</dbReference>
<dbReference type="InterPro" id="IPR039429">
    <property type="entry name" value="SHMT-like_dom"/>
</dbReference>
<dbReference type="NCBIfam" id="NF000586">
    <property type="entry name" value="PRK00011.1"/>
    <property type="match status" value="1"/>
</dbReference>
<dbReference type="PANTHER" id="PTHR11680">
    <property type="entry name" value="SERINE HYDROXYMETHYLTRANSFERASE"/>
    <property type="match status" value="1"/>
</dbReference>
<dbReference type="PANTHER" id="PTHR11680:SF50">
    <property type="entry name" value="SERINE HYDROXYMETHYLTRANSFERASE"/>
    <property type="match status" value="1"/>
</dbReference>
<dbReference type="Pfam" id="PF00464">
    <property type="entry name" value="SHMT"/>
    <property type="match status" value="1"/>
</dbReference>
<dbReference type="PIRSF" id="PIRSF000412">
    <property type="entry name" value="SHMT"/>
    <property type="match status" value="1"/>
</dbReference>
<dbReference type="SUPFAM" id="SSF53383">
    <property type="entry name" value="PLP-dependent transferases"/>
    <property type="match status" value="1"/>
</dbReference>
<dbReference type="PROSITE" id="PS00096">
    <property type="entry name" value="SHMT"/>
    <property type="match status" value="1"/>
</dbReference>
<gene>
    <name evidence="1" type="primary">glyA</name>
    <name type="ordered locus">Ping_1438</name>
</gene>